<keyword id="KW-0007">Acetylation</keyword>
<keyword id="KW-0010">Activator</keyword>
<keyword id="KW-0238">DNA-binding</keyword>
<keyword id="KW-1017">Isopeptide bond</keyword>
<keyword id="KW-0539">Nucleus</keyword>
<keyword id="KW-0597">Phosphoprotein</keyword>
<keyword id="KW-0656">Proto-oncogene</keyword>
<keyword id="KW-1185">Reference proteome</keyword>
<keyword id="KW-0804">Transcription</keyword>
<keyword id="KW-0805">Transcription regulation</keyword>
<keyword id="KW-0832">Ubl conjugation</keyword>
<proteinExistence type="evidence at transcript level"/>
<reference key="1">
    <citation type="journal article" date="2009" name="Science">
        <title>The genome sequence of taurine cattle: a window to ruminant biology and evolution.</title>
        <authorList>
            <consortium name="The bovine genome sequencing and analysis consortium"/>
        </authorList>
    </citation>
    <scope>NUCLEOTIDE SEQUENCE [LARGE SCALE GENOMIC DNA]</scope>
    <source>
        <strain>Hereford</strain>
    </source>
</reference>
<reference key="2">
    <citation type="submission" date="1998-06" db="EMBL/GenBank/DDBJ databases">
        <title>Stimulation of c-fos and c-jun mRNA in bovine luteal cells.</title>
        <authorList>
            <person name="Davis J.S."/>
            <person name="Fong H.W."/>
            <person name="Westfall S.W."/>
        </authorList>
    </citation>
    <scope>NUCLEOTIDE SEQUENCE [MRNA] OF 6-110</scope>
    <source>
        <tissue>Brain</tissue>
    </source>
</reference>
<evidence type="ECO:0000250" key="1"/>
<evidence type="ECO:0000250" key="2">
    <source>
        <dbReference type="UniProtKB" id="P05412"/>
    </source>
</evidence>
<evidence type="ECO:0000250" key="3">
    <source>
        <dbReference type="UniProtKB" id="P05627"/>
    </source>
</evidence>
<evidence type="ECO:0000250" key="4">
    <source>
        <dbReference type="UniProtKB" id="P17325"/>
    </source>
</evidence>
<evidence type="ECO:0000255" key="5">
    <source>
        <dbReference type="PROSITE-ProRule" id="PRU00978"/>
    </source>
</evidence>
<evidence type="ECO:0000256" key="6">
    <source>
        <dbReference type="SAM" id="MobiDB-lite"/>
    </source>
</evidence>
<evidence type="ECO:0000305" key="7"/>
<feature type="chain" id="PRO_0000076428" description="Transcription factor Jun">
    <location>
        <begin position="1"/>
        <end position="335"/>
    </location>
</feature>
<feature type="domain" description="bZIP" evidence="5">
    <location>
        <begin position="256"/>
        <end position="319"/>
    </location>
</feature>
<feature type="region of interest" description="Interaction with PAGE4" evidence="2">
    <location>
        <begin position="150"/>
        <end position="227"/>
    </location>
</feature>
<feature type="region of interest" description="Disordered" evidence="6">
    <location>
        <begin position="184"/>
        <end position="218"/>
    </location>
</feature>
<feature type="region of interest" description="Basic motif" evidence="5">
    <location>
        <begin position="256"/>
        <end position="283"/>
    </location>
</feature>
<feature type="region of interest" description="Leucine-zipper" evidence="5">
    <location>
        <begin position="284"/>
        <end position="312"/>
    </location>
</feature>
<feature type="compositionally biased region" description="Low complexity" evidence="6">
    <location>
        <begin position="189"/>
        <end position="207"/>
    </location>
</feature>
<feature type="site" description="Necessary for synergistic transcriptional activity with SMAD3" evidence="1">
    <location>
        <position position="272"/>
    </location>
</feature>
<feature type="modified residue" description="Phosphothreonine; by PAK2" evidence="2">
    <location>
        <position position="2"/>
    </location>
</feature>
<feature type="modified residue" description="Phosphothreonine; by PAK2" evidence="2">
    <location>
        <position position="8"/>
    </location>
</feature>
<feature type="modified residue" description="N6-acetyllysine; alternate" evidence="3">
    <location>
        <position position="56"/>
    </location>
</feature>
<feature type="modified residue" description="Phosphoserine" evidence="2">
    <location>
        <position position="58"/>
    </location>
</feature>
<feature type="modified residue" description="Phosphoserine; by MAPK8 and PLK3" evidence="2">
    <location>
        <position position="63"/>
    </location>
</feature>
<feature type="modified residue" description="Phosphoserine; by MAPK8 and PLK3" evidence="2">
    <location>
        <position position="73"/>
    </location>
</feature>
<feature type="modified residue" description="Phosphothreonine; by PAK2" evidence="2">
    <location>
        <position position="89"/>
    </location>
</feature>
<feature type="modified residue" description="Phosphothreonine" evidence="2">
    <location>
        <position position="91"/>
    </location>
</feature>
<feature type="modified residue" description="Phosphothreonine; by PAK2" evidence="2">
    <location>
        <position position="93"/>
    </location>
</feature>
<feature type="modified residue" description="Phosphothreonine; by GSK3-beta" evidence="2">
    <location>
        <position position="243"/>
    </location>
</feature>
<feature type="modified residue" description="Phosphoserine; by DYRK2 and GSK3-beta" evidence="2">
    <location>
        <position position="247"/>
    </location>
</feature>
<feature type="modified residue" description="Phosphoserine; by GSK3-beta" evidence="2">
    <location>
        <position position="253"/>
    </location>
</feature>
<feature type="modified residue" description="N6-acetyllysine" evidence="2">
    <location>
        <position position="275"/>
    </location>
</feature>
<feature type="modified residue" description="Phosphothreonine; by PAK2" evidence="2">
    <location>
        <position position="290"/>
    </location>
</feature>
<feature type="cross-link" description="Glycyl lysine isopeptide (Lys-Gly) (interchain with G-Cter in SUMO2)" evidence="2">
    <location>
        <position position="35"/>
    </location>
</feature>
<feature type="cross-link" description="Glycyl lysine isopeptide (Lys-Gly) (interchain with G-Cter in SUMO2)" evidence="2">
    <location>
        <position position="50"/>
    </location>
</feature>
<feature type="cross-link" description="Glycyl lysine isopeptide (Lys-Gly) (interchain with G-Cter in SUMO2); alternate" evidence="2">
    <location>
        <position position="56"/>
    </location>
</feature>
<feature type="cross-link" description="Glycyl lysine isopeptide (Lys-Gly) (interchain with G-Cter in SUMO2)" evidence="2">
    <location>
        <position position="70"/>
    </location>
</feature>
<feature type="cross-link" description="Glycyl lysine isopeptide (Lys-Gly) (interchain with G-Cter in SUMO2)" evidence="2">
    <location>
        <position position="230"/>
    </location>
</feature>
<comment type="function">
    <text evidence="2 3">Transcription factor that recognizes and binds to the AP-1 consensus motif 5'-TGA[GC]TCA-3'. Heterodimerizes with proteins of the FOS family to form an AP-1 transcription complex, thereby enhancing its DNA binding activity to the AP-1 consensus sequence 5'-TGA[GC]TCA-3' and enhancing its transcriptional activity (By similarity). Together with FOSB, plays a role in activation-induced cell death of T cells by binding to the AP-1 promoter site of FASLG/CD95L, and inducing its transcription in response to activation of the TCR/CD3 signaling pathway (By similarity). Promotes activity of NR5A1 when phosphorylated by HIPK3 leading to increased steroidogenic gene expression upon cAMP signaling pathway stimulation. Involved in activated KRAS-mediated transcriptional activation of USP28. Binds to the USP28 promoter.</text>
</comment>
<comment type="subunit">
    <text evidence="2 3 4">Heterodimer with either BATF3 or ATF7 (By similarity). Heterodimer with FOS (By similarity). Heterodimer with FOSB isoform 1 and 2 (By similarity). Component of an AP-1 transcription factor complex composed of JUN-FOS heterodimers (By similarity). As part of the AP-1 transcription factor complex, forms heterodimers with FOSB, thereby binding to the AP-1 consensus sequence and stimulating transcription (By similarity). Interacts with FOS and FOSB isoform 1 and 2 (By similarity). The ATF7/JUN heterodimer is essential for ATF7 transactivation activity (By similarity). Interacts with TSC22D3 (via N-terminus); the interaction inhibits the binding of active AP1 to its target DNA (By similarity). Interacts with HIVEP3 and MYBBP1A (By similarity). Interacts with SP1, SPIB and TCF20. Interacts with COPS5; the interaction leads indirectly to its phosphorylation. Component of the SMAD3/SMAD4/JUN/FOS/complex which forms at the AP1 promoter site. The SMAD3/SMAD4 heterodimer acts synergistically with the JUN/FOS heterodimer to activate transcription in response to TGF-beta. Interacts (via its basic DNA binding and leucine zipper domains) with SMAD3 (via an N-terminal domain); the interaction is required for TGF-beta-mediated transactivation of the SMAD3/SMAD4/JUN/FOS/complex. Interacts with methylated RNF187. Binds to HIPK3. Interacts (when phosphorylated) with FBXW7. Found in a complex with PRR7 and FBXW7. Interacts with PRR7 and FBXW7; the interaction inhibits ubiquitination-mediated JUN degradation promoting its phosphorylation and transcriptional activity (By similarity). Interacts with RBM39 (By similarity). Interacts with PAGE4 (By similarity). Interacts with ARK2N and CSNK2B; the interaction with ARK2N is mediated by CSNK2B (By similarity).</text>
</comment>
<comment type="subcellular location">
    <subcellularLocation>
        <location evidence="2">Nucleus</location>
    </subcellularLocation>
</comment>
<comment type="PTM">
    <text evidence="2">Phosphorylated by CaMK4 and PRKDC; phosphorylation enhances the transcriptional activity. Phosphorylated by HIPK3. Phosphorylated by DYRK2 at Ser-247; this primes the protein for subsequent phosphorylation by GSK3B at Thr-243. Phosphorylated at Thr-243, Ser-247 and Ser-253 by GSK3B; phosphorylation reduces its ability to bind DNA. Phosphorylated by PAK2 at Thr-2, Thr-8, Thr-89, Thr-93 and Thr-290 thereby promoting JUN-mediated cell proliferation and transformation. Phosphorylated by PLK3 following hypoxia or UV irradiation, leading to increase DNA-binding activity (By similarity). Phosphorylated by VRK1 (By similarity).</text>
</comment>
<comment type="PTM">
    <text evidence="2">Ubiquitinated by the SCF(FBXW7), leading to its degradation. Ubiquitination takes place following phosphorylation, that promotes interaction with FBXW7.</text>
</comment>
<comment type="PTM">
    <text evidence="2">Acetylated at Lys-275 by EP300.</text>
</comment>
<comment type="similarity">
    <text evidence="7">Belongs to the bZIP family. Jun subfamily.</text>
</comment>
<gene>
    <name type="primary">JUN</name>
</gene>
<name>JUN_BOVIN</name>
<sequence length="335" mass="36084">MTAKMETTFYDDALNASFLQSESGAYGYSNPKILKQSMTLNLADPVGSLKPHLRAKNSDLLTSPDVGLLKLASPELERLIIQSSNGHITTTPTPTQFLCPKNVTDEQEGFAEGFVRALAELHSQNTLPSVTSAAQPVSGAGLVAPAVASVAGGSGSGGFSASLHSEPPVYANLSNFNPGSLSSGGGAPSYGAAGLAFPAQPQQQQQQPPQPPHHLPQQIPVQHPRLQALKEEPQTVPEMPGETPPLSPIDMESQERIKAERKRMRNRIAASKCRKRKLERIARLEEKVKTLKAQNSELASTANMLREQVAQLKQKVMNHVNSGCQLMLTQQLQTF</sequence>
<dbReference type="EMBL" id="AF069514">
    <property type="protein sequence ID" value="AAC21576.1"/>
    <property type="molecule type" value="mRNA"/>
</dbReference>
<dbReference type="BMRB" id="O77627"/>
<dbReference type="SMR" id="O77627"/>
<dbReference type="DIP" id="DIP-61529N"/>
<dbReference type="FunCoup" id="O77627">
    <property type="interactions" value="1367"/>
</dbReference>
<dbReference type="IntAct" id="O77627">
    <property type="interactions" value="1"/>
</dbReference>
<dbReference type="STRING" id="9913.ENSBTAP00000005279"/>
<dbReference type="iPTMnet" id="O77627"/>
<dbReference type="PaxDb" id="9913-ENSBTAP00000005279"/>
<dbReference type="Ensembl" id="ENSBTAT00000102693.1">
    <property type="protein sequence ID" value="ENSBTAP00000081480.1"/>
    <property type="gene ID" value="ENSBTAG00000068635.1"/>
</dbReference>
<dbReference type="Ensembl" id="ENSBTAT00000117664.1">
    <property type="protein sequence ID" value="ENSBTAP00000083530.1"/>
    <property type="gene ID" value="ENSBTAG00000068635.1"/>
</dbReference>
<dbReference type="eggNOG" id="KOG0837">
    <property type="taxonomic scope" value="Eukaryota"/>
</dbReference>
<dbReference type="GeneTree" id="ENSGT00940000162061"/>
<dbReference type="InParanoid" id="O77627"/>
<dbReference type="OrthoDB" id="2187714at2759"/>
<dbReference type="Proteomes" id="UP000009136">
    <property type="component" value="Chromosome 3"/>
</dbReference>
<dbReference type="GO" id="GO:0000791">
    <property type="term" value="C:euchromatin"/>
    <property type="evidence" value="ECO:0007669"/>
    <property type="project" value="Ensembl"/>
</dbReference>
<dbReference type="GO" id="GO:0005654">
    <property type="term" value="C:nucleoplasm"/>
    <property type="evidence" value="ECO:0007669"/>
    <property type="project" value="Ensembl"/>
</dbReference>
<dbReference type="GO" id="GO:0035976">
    <property type="term" value="C:transcription factor AP-1 complex"/>
    <property type="evidence" value="ECO:0007669"/>
    <property type="project" value="Ensembl"/>
</dbReference>
<dbReference type="GO" id="GO:0005667">
    <property type="term" value="C:transcription regulator complex"/>
    <property type="evidence" value="ECO:0000318"/>
    <property type="project" value="GO_Central"/>
</dbReference>
<dbReference type="GO" id="GO:0017053">
    <property type="term" value="C:transcription repressor complex"/>
    <property type="evidence" value="ECO:0007669"/>
    <property type="project" value="Ensembl"/>
</dbReference>
<dbReference type="GO" id="GO:0035497">
    <property type="term" value="F:cAMP response element binding"/>
    <property type="evidence" value="ECO:0007669"/>
    <property type="project" value="Ensembl"/>
</dbReference>
<dbReference type="GO" id="GO:0003682">
    <property type="term" value="F:chromatin binding"/>
    <property type="evidence" value="ECO:0007669"/>
    <property type="project" value="Ensembl"/>
</dbReference>
<dbReference type="GO" id="GO:0001228">
    <property type="term" value="F:DNA-binding transcription activator activity, RNA polymerase II-specific"/>
    <property type="evidence" value="ECO:0007669"/>
    <property type="project" value="Ensembl"/>
</dbReference>
<dbReference type="GO" id="GO:0000981">
    <property type="term" value="F:DNA-binding transcription factor activity, RNA polymerase II-specific"/>
    <property type="evidence" value="ECO:0000318"/>
    <property type="project" value="GO_Central"/>
</dbReference>
<dbReference type="GO" id="GO:0001227">
    <property type="term" value="F:DNA-binding transcription repressor activity, RNA polymerase II-specific"/>
    <property type="evidence" value="ECO:0007669"/>
    <property type="project" value="Ensembl"/>
</dbReference>
<dbReference type="GO" id="GO:0140296">
    <property type="term" value="F:general transcription initiation factor binding"/>
    <property type="evidence" value="ECO:0007669"/>
    <property type="project" value="Ensembl"/>
</dbReference>
<dbReference type="GO" id="GO:0005096">
    <property type="term" value="F:GTPase activator activity"/>
    <property type="evidence" value="ECO:0007669"/>
    <property type="project" value="Ensembl"/>
</dbReference>
<dbReference type="GO" id="GO:0042802">
    <property type="term" value="F:identical protein binding"/>
    <property type="evidence" value="ECO:0007669"/>
    <property type="project" value="Ensembl"/>
</dbReference>
<dbReference type="GO" id="GO:0070412">
    <property type="term" value="F:R-SMAD binding"/>
    <property type="evidence" value="ECO:0007669"/>
    <property type="project" value="Ensembl"/>
</dbReference>
<dbReference type="GO" id="GO:0000978">
    <property type="term" value="F:RNA polymerase II cis-regulatory region sequence-specific DNA binding"/>
    <property type="evidence" value="ECO:0000318"/>
    <property type="project" value="GO_Central"/>
</dbReference>
<dbReference type="GO" id="GO:0061629">
    <property type="term" value="F:RNA polymerase II-specific DNA-binding transcription factor binding"/>
    <property type="evidence" value="ECO:0007669"/>
    <property type="project" value="Ensembl"/>
</dbReference>
<dbReference type="GO" id="GO:0000976">
    <property type="term" value="F:transcription cis-regulatory region binding"/>
    <property type="evidence" value="ECO:0000250"/>
    <property type="project" value="UniProtKB"/>
</dbReference>
<dbReference type="GO" id="GO:0031625">
    <property type="term" value="F:ubiquitin protein ligase binding"/>
    <property type="evidence" value="ECO:0007669"/>
    <property type="project" value="Ensembl"/>
</dbReference>
<dbReference type="GO" id="GO:0001525">
    <property type="term" value="P:angiogenesis"/>
    <property type="evidence" value="ECO:0007669"/>
    <property type="project" value="Ensembl"/>
</dbReference>
<dbReference type="GO" id="GO:0006915">
    <property type="term" value="P:apoptotic process"/>
    <property type="evidence" value="ECO:0007669"/>
    <property type="project" value="Ensembl"/>
</dbReference>
<dbReference type="GO" id="GO:0031103">
    <property type="term" value="P:axon regeneration"/>
    <property type="evidence" value="ECO:0007669"/>
    <property type="project" value="Ensembl"/>
</dbReference>
<dbReference type="GO" id="GO:0008283">
    <property type="term" value="P:cell population proliferation"/>
    <property type="evidence" value="ECO:0007669"/>
    <property type="project" value="Ensembl"/>
</dbReference>
<dbReference type="GO" id="GO:0072740">
    <property type="term" value="P:cellular response to anisomycin"/>
    <property type="evidence" value="ECO:0007669"/>
    <property type="project" value="Ensembl"/>
</dbReference>
<dbReference type="GO" id="GO:0071277">
    <property type="term" value="P:cellular response to calcium ion"/>
    <property type="evidence" value="ECO:0007669"/>
    <property type="project" value="Ensembl"/>
</dbReference>
<dbReference type="GO" id="GO:0061029">
    <property type="term" value="P:eyelid development in camera-type eye"/>
    <property type="evidence" value="ECO:0007669"/>
    <property type="project" value="Ensembl"/>
</dbReference>
<dbReference type="GO" id="GO:0007254">
    <property type="term" value="P:JNK cascade"/>
    <property type="evidence" value="ECO:0007669"/>
    <property type="project" value="Ensembl"/>
</dbReference>
<dbReference type="GO" id="GO:0035026">
    <property type="term" value="P:leading edge cell differentiation"/>
    <property type="evidence" value="ECO:0007669"/>
    <property type="project" value="Ensembl"/>
</dbReference>
<dbReference type="GO" id="GO:0001889">
    <property type="term" value="P:liver development"/>
    <property type="evidence" value="ECO:0007669"/>
    <property type="project" value="Ensembl"/>
</dbReference>
<dbReference type="GO" id="GO:0001774">
    <property type="term" value="P:microglial cell activation"/>
    <property type="evidence" value="ECO:0007669"/>
    <property type="project" value="Ensembl"/>
</dbReference>
<dbReference type="GO" id="GO:0030224">
    <property type="term" value="P:monocyte differentiation"/>
    <property type="evidence" value="ECO:0007669"/>
    <property type="project" value="Ensembl"/>
</dbReference>
<dbReference type="GO" id="GO:0043922">
    <property type="term" value="P:negative regulation by host of viral transcription"/>
    <property type="evidence" value="ECO:0007669"/>
    <property type="project" value="Ensembl"/>
</dbReference>
<dbReference type="GO" id="GO:0008285">
    <property type="term" value="P:negative regulation of cell population proliferation"/>
    <property type="evidence" value="ECO:0007669"/>
    <property type="project" value="Ensembl"/>
</dbReference>
<dbReference type="GO" id="GO:0043524">
    <property type="term" value="P:negative regulation of neuron apoptotic process"/>
    <property type="evidence" value="ECO:0007669"/>
    <property type="project" value="Ensembl"/>
</dbReference>
<dbReference type="GO" id="GO:0003151">
    <property type="term" value="P:outflow tract morphogenesis"/>
    <property type="evidence" value="ECO:0007669"/>
    <property type="project" value="Ensembl"/>
</dbReference>
<dbReference type="GO" id="GO:0043923">
    <property type="term" value="P:positive regulation by host of viral transcription"/>
    <property type="evidence" value="ECO:0007669"/>
    <property type="project" value="Ensembl"/>
</dbReference>
<dbReference type="GO" id="GO:0043065">
    <property type="term" value="P:positive regulation of apoptotic process"/>
    <property type="evidence" value="ECO:0007669"/>
    <property type="project" value="Ensembl"/>
</dbReference>
<dbReference type="GO" id="GO:0045893">
    <property type="term" value="P:positive regulation of DNA-templated transcription"/>
    <property type="evidence" value="ECO:0000250"/>
    <property type="project" value="UniProtKB"/>
</dbReference>
<dbReference type="GO" id="GO:2000144">
    <property type="term" value="P:positive regulation of DNA-templated transcription initiation"/>
    <property type="evidence" value="ECO:0007669"/>
    <property type="project" value="Ensembl"/>
</dbReference>
<dbReference type="GO" id="GO:0001938">
    <property type="term" value="P:positive regulation of endothelial cell proliferation"/>
    <property type="evidence" value="ECO:0007669"/>
    <property type="project" value="Ensembl"/>
</dbReference>
<dbReference type="GO" id="GO:0010634">
    <property type="term" value="P:positive regulation of epithelial cell migration"/>
    <property type="evidence" value="ECO:0007669"/>
    <property type="project" value="Ensembl"/>
</dbReference>
<dbReference type="GO" id="GO:0070374">
    <property type="term" value="P:positive regulation of ERK1 and ERK2 cascade"/>
    <property type="evidence" value="ECO:0007669"/>
    <property type="project" value="Ensembl"/>
</dbReference>
<dbReference type="GO" id="GO:0048146">
    <property type="term" value="P:positive regulation of fibroblast proliferation"/>
    <property type="evidence" value="ECO:0007669"/>
    <property type="project" value="Ensembl"/>
</dbReference>
<dbReference type="GO" id="GO:1902895">
    <property type="term" value="P:positive regulation of miRNA transcription"/>
    <property type="evidence" value="ECO:0007669"/>
    <property type="project" value="Ensembl"/>
</dbReference>
<dbReference type="GO" id="GO:0045944">
    <property type="term" value="P:positive regulation of transcription by RNA polymerase II"/>
    <property type="evidence" value="ECO:0000250"/>
    <property type="project" value="UniProtKB"/>
</dbReference>
<dbReference type="GO" id="GO:1904707">
    <property type="term" value="P:positive regulation of vascular associated smooth muscle cell proliferation"/>
    <property type="evidence" value="ECO:0007669"/>
    <property type="project" value="Ensembl"/>
</dbReference>
<dbReference type="GO" id="GO:0051726">
    <property type="term" value="P:regulation of cell cycle"/>
    <property type="evidence" value="ECO:0000318"/>
    <property type="project" value="GO_Central"/>
</dbReference>
<dbReference type="GO" id="GO:0042127">
    <property type="term" value="P:regulation of cell population proliferation"/>
    <property type="evidence" value="ECO:0000318"/>
    <property type="project" value="GO_Central"/>
</dbReference>
<dbReference type="GO" id="GO:0019046">
    <property type="term" value="P:release from viral latency"/>
    <property type="evidence" value="ECO:0007669"/>
    <property type="project" value="Ensembl"/>
</dbReference>
<dbReference type="GO" id="GO:0034976">
    <property type="term" value="P:response to endoplasmic reticulum stress"/>
    <property type="evidence" value="ECO:0007669"/>
    <property type="project" value="Ensembl"/>
</dbReference>
<dbReference type="GO" id="GO:0035994">
    <property type="term" value="P:response to muscle stretch"/>
    <property type="evidence" value="ECO:0007669"/>
    <property type="project" value="Ensembl"/>
</dbReference>
<dbReference type="GO" id="GO:0048545">
    <property type="term" value="P:response to steroid hormone"/>
    <property type="evidence" value="ECO:0000318"/>
    <property type="project" value="GO_Central"/>
</dbReference>
<dbReference type="GO" id="GO:0009410">
    <property type="term" value="P:response to xenobiotic stimulus"/>
    <property type="evidence" value="ECO:0007669"/>
    <property type="project" value="Ensembl"/>
</dbReference>
<dbReference type="GO" id="GO:0060395">
    <property type="term" value="P:SMAD protein signal transduction"/>
    <property type="evidence" value="ECO:0007669"/>
    <property type="project" value="Ensembl"/>
</dbReference>
<dbReference type="GO" id="GO:0007179">
    <property type="term" value="P:transforming growth factor beta receptor signaling pathway"/>
    <property type="evidence" value="ECO:0007669"/>
    <property type="project" value="Ensembl"/>
</dbReference>
<dbReference type="CDD" id="cd14696">
    <property type="entry name" value="bZIP_Jun"/>
    <property type="match status" value="1"/>
</dbReference>
<dbReference type="FunFam" id="1.20.5.170:FF:000012">
    <property type="entry name" value="Putative transcription factor AP-1"/>
    <property type="match status" value="1"/>
</dbReference>
<dbReference type="Gene3D" id="1.20.5.170">
    <property type="match status" value="1"/>
</dbReference>
<dbReference type="InterPro" id="IPR050946">
    <property type="entry name" value="AP-1_TF_bZIP"/>
</dbReference>
<dbReference type="InterPro" id="IPR004827">
    <property type="entry name" value="bZIP"/>
</dbReference>
<dbReference type="InterPro" id="IPR046347">
    <property type="entry name" value="bZIP_sf"/>
</dbReference>
<dbReference type="InterPro" id="IPR005643">
    <property type="entry name" value="JNK"/>
</dbReference>
<dbReference type="InterPro" id="IPR002112">
    <property type="entry name" value="Leuzip_Jun"/>
</dbReference>
<dbReference type="InterPro" id="IPR008917">
    <property type="entry name" value="TF_DNA-bd_sf"/>
</dbReference>
<dbReference type="PANTHER" id="PTHR11462">
    <property type="entry name" value="JUN TRANSCRIPTION FACTOR-RELATED"/>
    <property type="match status" value="1"/>
</dbReference>
<dbReference type="PANTHER" id="PTHR11462:SF8">
    <property type="entry name" value="TRANSCRIPTION FACTOR JUN"/>
    <property type="match status" value="1"/>
</dbReference>
<dbReference type="Pfam" id="PF00170">
    <property type="entry name" value="bZIP_1"/>
    <property type="match status" value="1"/>
</dbReference>
<dbReference type="Pfam" id="PF03957">
    <property type="entry name" value="Jun"/>
    <property type="match status" value="1"/>
</dbReference>
<dbReference type="PRINTS" id="PR00043">
    <property type="entry name" value="LEUZIPPRJUN"/>
</dbReference>
<dbReference type="SMART" id="SM00338">
    <property type="entry name" value="BRLZ"/>
    <property type="match status" value="1"/>
</dbReference>
<dbReference type="SUPFAM" id="SSF47454">
    <property type="entry name" value="A DNA-binding domain in eukaryotic transcription factors"/>
    <property type="match status" value="1"/>
</dbReference>
<dbReference type="SUPFAM" id="SSF57959">
    <property type="entry name" value="Leucine zipper domain"/>
    <property type="match status" value="1"/>
</dbReference>
<dbReference type="PROSITE" id="PS50217">
    <property type="entry name" value="BZIP"/>
    <property type="match status" value="1"/>
</dbReference>
<dbReference type="PROSITE" id="PS00036">
    <property type="entry name" value="BZIP_BASIC"/>
    <property type="match status" value="1"/>
</dbReference>
<protein>
    <recommendedName>
        <fullName evidence="7">Transcription factor Jun</fullName>
    </recommendedName>
    <alternativeName>
        <fullName>Activator protein 1</fullName>
        <shortName>AP1</shortName>
    </alternativeName>
    <alternativeName>
        <fullName>Proto-oncogene c-Jun</fullName>
    </alternativeName>
    <alternativeName>
        <fullName evidence="7">Transcription factor AP-1 subunit Jun</fullName>
    </alternativeName>
    <alternativeName>
        <fullName>V-jun avian sarcoma virus 17 oncogene homolog</fullName>
    </alternativeName>
</protein>
<accession>O77627</accession>
<organism>
    <name type="scientific">Bos taurus</name>
    <name type="common">Bovine</name>
    <dbReference type="NCBI Taxonomy" id="9913"/>
    <lineage>
        <taxon>Eukaryota</taxon>
        <taxon>Metazoa</taxon>
        <taxon>Chordata</taxon>
        <taxon>Craniata</taxon>
        <taxon>Vertebrata</taxon>
        <taxon>Euteleostomi</taxon>
        <taxon>Mammalia</taxon>
        <taxon>Eutheria</taxon>
        <taxon>Laurasiatheria</taxon>
        <taxon>Artiodactyla</taxon>
        <taxon>Ruminantia</taxon>
        <taxon>Pecora</taxon>
        <taxon>Bovidae</taxon>
        <taxon>Bovinae</taxon>
        <taxon>Bos</taxon>
    </lineage>
</organism>